<evidence type="ECO:0000250" key="1"/>
<evidence type="ECO:0000255" key="2">
    <source>
        <dbReference type="PROSITE-ProRule" id="PRU00037"/>
    </source>
</evidence>
<evidence type="ECO:0000269" key="3">
    <source>
    </source>
</evidence>
<organism>
    <name type="scientific">Arabidopsis thaliana</name>
    <name type="common">Mouse-ear cress</name>
    <dbReference type="NCBI Taxonomy" id="3702"/>
    <lineage>
        <taxon>Eukaryota</taxon>
        <taxon>Viridiplantae</taxon>
        <taxon>Streptophyta</taxon>
        <taxon>Embryophyta</taxon>
        <taxon>Tracheophyta</taxon>
        <taxon>Spermatophyta</taxon>
        <taxon>Magnoliopsida</taxon>
        <taxon>eudicotyledons</taxon>
        <taxon>Gunneridae</taxon>
        <taxon>Pentapetalae</taxon>
        <taxon>rosids</taxon>
        <taxon>malvids</taxon>
        <taxon>Brassicales</taxon>
        <taxon>Brassicaceae</taxon>
        <taxon>Camelineae</taxon>
        <taxon>Arabidopsis</taxon>
    </lineage>
</organism>
<sequence>MGTQTNKGFFYDEFLKVLKEQQVDVRLMARDSEKDAAISAHKRILSARSEVFEEMFESDKYKASSKLETITLSEMKHEVLEAFVDFTYSDGSMLSEKAKQHAMSLYSAAKDYEIPRLWCLCRKELIASLNMSNALRVLQLAQIPYDESLSVAAFTTIKNSKLKLSSSTKVKVFVVNHPNGPLEITRAIFPRN</sequence>
<comment type="function">
    <text evidence="1">May act as a substrate-specific adapter of an E3 ubiquitin-protein ligase complex (CUL3-RBX1-BTB) which mediates the ubiquitination and subsequent proteasomal degradation of target proteins.</text>
</comment>
<comment type="pathway">
    <text>Protein modification; protein ubiquitination.</text>
</comment>
<comment type="domain">
    <text evidence="3">The BTB/POZ domain mediates the interaction with some component of ubiquitin ligase complexes.</text>
</comment>
<keyword id="KW-1185">Reference proteome</keyword>
<keyword id="KW-0833">Ubl conjugation pathway</keyword>
<feature type="chain" id="PRO_0000406002" description="Putative BTB/POZ domain-containing protein At4g04090">
    <location>
        <begin position="1"/>
        <end position="192"/>
    </location>
</feature>
<feature type="domain" description="BTB" evidence="2">
    <location>
        <begin position="23"/>
        <end position="96"/>
    </location>
</feature>
<proteinExistence type="inferred from homology"/>
<accession>O81432</accession>
<protein>
    <recommendedName>
        <fullName>Putative BTB/POZ domain-containing protein At4g04090</fullName>
    </recommendedName>
</protein>
<name>Y4409_ARATH</name>
<gene>
    <name type="ordered locus">At4g04090</name>
    <name type="ORF">T24H24.21</name>
</gene>
<dbReference type="EMBL" id="AF075598">
    <property type="protein sequence ID" value="AAC28212.1"/>
    <property type="molecule type" value="Genomic_DNA"/>
</dbReference>
<dbReference type="EMBL" id="AL161499">
    <property type="protein sequence ID" value="CAB77877.1"/>
    <property type="molecule type" value="Genomic_DNA"/>
</dbReference>
<dbReference type="EMBL" id="CP002687">
    <property type="protein sequence ID" value="AEE82368.1"/>
    <property type="molecule type" value="Genomic_DNA"/>
</dbReference>
<dbReference type="PIR" id="T01465">
    <property type="entry name" value="T01465"/>
</dbReference>
<dbReference type="RefSeq" id="NP_192318.1">
    <property type="nucleotide sequence ID" value="NM_116647.1"/>
</dbReference>
<dbReference type="SMR" id="O81432"/>
<dbReference type="FunCoup" id="O81432">
    <property type="interactions" value="100"/>
</dbReference>
<dbReference type="STRING" id="3702.O81432"/>
<dbReference type="PaxDb" id="3702-AT4G04090.1"/>
<dbReference type="EnsemblPlants" id="AT4G04090.1">
    <property type="protein sequence ID" value="AT4G04090.1"/>
    <property type="gene ID" value="AT4G04090"/>
</dbReference>
<dbReference type="GeneID" id="825720"/>
<dbReference type="Gramene" id="AT4G04090.1">
    <property type="protein sequence ID" value="AT4G04090.1"/>
    <property type="gene ID" value="AT4G04090"/>
</dbReference>
<dbReference type="KEGG" id="ath:AT4G04090"/>
<dbReference type="Araport" id="AT4G04090"/>
<dbReference type="TAIR" id="AT4G04090"/>
<dbReference type="eggNOG" id="KOG1987">
    <property type="taxonomic scope" value="Eukaryota"/>
</dbReference>
<dbReference type="HOGENOM" id="CLU_004253_9_1_1"/>
<dbReference type="InParanoid" id="O81432"/>
<dbReference type="OMA" id="CASILMS"/>
<dbReference type="PhylomeDB" id="O81432"/>
<dbReference type="UniPathway" id="UPA00143"/>
<dbReference type="PRO" id="PR:O81432"/>
<dbReference type="Proteomes" id="UP000006548">
    <property type="component" value="Chromosome 4"/>
</dbReference>
<dbReference type="ExpressionAtlas" id="O81432">
    <property type="expression patterns" value="baseline and differential"/>
</dbReference>
<dbReference type="GO" id="GO:0016567">
    <property type="term" value="P:protein ubiquitination"/>
    <property type="evidence" value="ECO:0007669"/>
    <property type="project" value="UniProtKB-UniPathway"/>
</dbReference>
<dbReference type="CDD" id="cd18186">
    <property type="entry name" value="BTB_POZ_ZBTB_KLHL-like"/>
    <property type="match status" value="1"/>
</dbReference>
<dbReference type="Gene3D" id="3.30.710.10">
    <property type="entry name" value="Potassium Channel Kv1.1, Chain A"/>
    <property type="match status" value="1"/>
</dbReference>
<dbReference type="InterPro" id="IPR044784">
    <property type="entry name" value="At1g01640-like"/>
</dbReference>
<dbReference type="InterPro" id="IPR000210">
    <property type="entry name" value="BTB/POZ_dom"/>
</dbReference>
<dbReference type="InterPro" id="IPR011333">
    <property type="entry name" value="SKP1/BTB/POZ_sf"/>
</dbReference>
<dbReference type="PANTHER" id="PTHR47274:SF7">
    <property type="entry name" value="(RAPE) HYPOTHETICAL PROTEIN"/>
    <property type="match status" value="1"/>
</dbReference>
<dbReference type="PANTHER" id="PTHR47274">
    <property type="entry name" value="BTB/POZ DOMAIN CONTAINING PROTEIN, EXPRESSED-RELATED"/>
    <property type="match status" value="1"/>
</dbReference>
<dbReference type="Pfam" id="PF00651">
    <property type="entry name" value="BTB"/>
    <property type="match status" value="1"/>
</dbReference>
<dbReference type="SMART" id="SM00225">
    <property type="entry name" value="BTB"/>
    <property type="match status" value="1"/>
</dbReference>
<dbReference type="SUPFAM" id="SSF54695">
    <property type="entry name" value="POZ domain"/>
    <property type="match status" value="1"/>
</dbReference>
<dbReference type="PROSITE" id="PS50097">
    <property type="entry name" value="BTB"/>
    <property type="match status" value="1"/>
</dbReference>
<reference key="1">
    <citation type="journal article" date="1999" name="Nature">
        <title>Sequence and analysis of chromosome 4 of the plant Arabidopsis thaliana.</title>
        <authorList>
            <person name="Mayer K.F.X."/>
            <person name="Schueller C."/>
            <person name="Wambutt R."/>
            <person name="Murphy G."/>
            <person name="Volckaert G."/>
            <person name="Pohl T."/>
            <person name="Duesterhoeft A."/>
            <person name="Stiekema W."/>
            <person name="Entian K.-D."/>
            <person name="Terryn N."/>
            <person name="Harris B."/>
            <person name="Ansorge W."/>
            <person name="Brandt P."/>
            <person name="Grivell L.A."/>
            <person name="Rieger M."/>
            <person name="Weichselgartner M."/>
            <person name="de Simone V."/>
            <person name="Obermaier B."/>
            <person name="Mache R."/>
            <person name="Mueller M."/>
            <person name="Kreis M."/>
            <person name="Delseny M."/>
            <person name="Puigdomenech P."/>
            <person name="Watson M."/>
            <person name="Schmidtheini T."/>
            <person name="Reichert B."/>
            <person name="Portetelle D."/>
            <person name="Perez-Alonso M."/>
            <person name="Boutry M."/>
            <person name="Bancroft I."/>
            <person name="Vos P."/>
            <person name="Hoheisel J."/>
            <person name="Zimmermann W."/>
            <person name="Wedler H."/>
            <person name="Ridley P."/>
            <person name="Langham S.-A."/>
            <person name="McCullagh B."/>
            <person name="Bilham L."/>
            <person name="Robben J."/>
            <person name="van der Schueren J."/>
            <person name="Grymonprez B."/>
            <person name="Chuang Y.-J."/>
            <person name="Vandenbussche F."/>
            <person name="Braeken M."/>
            <person name="Weltjens I."/>
            <person name="Voet M."/>
            <person name="Bastiaens I."/>
            <person name="Aert R."/>
            <person name="Defoor E."/>
            <person name="Weitzenegger T."/>
            <person name="Bothe G."/>
            <person name="Ramsperger U."/>
            <person name="Hilbert H."/>
            <person name="Braun M."/>
            <person name="Holzer E."/>
            <person name="Brandt A."/>
            <person name="Peters S."/>
            <person name="van Staveren M."/>
            <person name="Dirkse W."/>
            <person name="Mooijman P."/>
            <person name="Klein Lankhorst R."/>
            <person name="Rose M."/>
            <person name="Hauf J."/>
            <person name="Koetter P."/>
            <person name="Berneiser S."/>
            <person name="Hempel S."/>
            <person name="Feldpausch M."/>
            <person name="Lamberth S."/>
            <person name="Van den Daele H."/>
            <person name="De Keyser A."/>
            <person name="Buysshaert C."/>
            <person name="Gielen J."/>
            <person name="Villarroel R."/>
            <person name="De Clercq R."/>
            <person name="van Montagu M."/>
            <person name="Rogers J."/>
            <person name="Cronin A."/>
            <person name="Quail M.A."/>
            <person name="Bray-Allen S."/>
            <person name="Clark L."/>
            <person name="Doggett J."/>
            <person name="Hall S."/>
            <person name="Kay M."/>
            <person name="Lennard N."/>
            <person name="McLay K."/>
            <person name="Mayes R."/>
            <person name="Pettett A."/>
            <person name="Rajandream M.A."/>
            <person name="Lyne M."/>
            <person name="Benes V."/>
            <person name="Rechmann S."/>
            <person name="Borkova D."/>
            <person name="Bloecker H."/>
            <person name="Scharfe M."/>
            <person name="Grimm M."/>
            <person name="Loehnert T.-H."/>
            <person name="Dose S."/>
            <person name="de Haan M."/>
            <person name="Maarse A.C."/>
            <person name="Schaefer M."/>
            <person name="Mueller-Auer S."/>
            <person name="Gabel C."/>
            <person name="Fuchs M."/>
            <person name="Fartmann B."/>
            <person name="Granderath K."/>
            <person name="Dauner D."/>
            <person name="Herzl A."/>
            <person name="Neumann S."/>
            <person name="Argiriou A."/>
            <person name="Vitale D."/>
            <person name="Liguori R."/>
            <person name="Piravandi E."/>
            <person name="Massenet O."/>
            <person name="Quigley F."/>
            <person name="Clabauld G."/>
            <person name="Muendlein A."/>
            <person name="Felber R."/>
            <person name="Schnabl S."/>
            <person name="Hiller R."/>
            <person name="Schmidt W."/>
            <person name="Lecharny A."/>
            <person name="Aubourg S."/>
            <person name="Chefdor F."/>
            <person name="Cooke R."/>
            <person name="Berger C."/>
            <person name="Monfort A."/>
            <person name="Casacuberta E."/>
            <person name="Gibbons T."/>
            <person name="Weber N."/>
            <person name="Vandenbol M."/>
            <person name="Bargues M."/>
            <person name="Terol J."/>
            <person name="Torres A."/>
            <person name="Perez-Perez A."/>
            <person name="Purnelle B."/>
            <person name="Bent E."/>
            <person name="Johnson S."/>
            <person name="Tacon D."/>
            <person name="Jesse T."/>
            <person name="Heijnen L."/>
            <person name="Schwarz S."/>
            <person name="Scholler P."/>
            <person name="Heber S."/>
            <person name="Francs P."/>
            <person name="Bielke C."/>
            <person name="Frishman D."/>
            <person name="Haase D."/>
            <person name="Lemcke K."/>
            <person name="Mewes H.-W."/>
            <person name="Stocker S."/>
            <person name="Zaccaria P."/>
            <person name="Bevan M."/>
            <person name="Wilson R.K."/>
            <person name="de la Bastide M."/>
            <person name="Habermann K."/>
            <person name="Parnell L."/>
            <person name="Dedhia N."/>
            <person name="Gnoj L."/>
            <person name="Schutz K."/>
            <person name="Huang E."/>
            <person name="Spiegel L."/>
            <person name="Sekhon M."/>
            <person name="Murray J."/>
            <person name="Sheet P."/>
            <person name="Cordes M."/>
            <person name="Abu-Threideh J."/>
            <person name="Stoneking T."/>
            <person name="Kalicki J."/>
            <person name="Graves T."/>
            <person name="Harmon G."/>
            <person name="Edwards J."/>
            <person name="Latreille P."/>
            <person name="Courtney L."/>
            <person name="Cloud J."/>
            <person name="Abbott A."/>
            <person name="Scott K."/>
            <person name="Johnson D."/>
            <person name="Minx P."/>
            <person name="Bentley D."/>
            <person name="Fulton B."/>
            <person name="Miller N."/>
            <person name="Greco T."/>
            <person name="Kemp K."/>
            <person name="Kramer J."/>
            <person name="Fulton L."/>
            <person name="Mardis E."/>
            <person name="Dante M."/>
            <person name="Pepin K."/>
            <person name="Hillier L.W."/>
            <person name="Nelson J."/>
            <person name="Spieth J."/>
            <person name="Ryan E."/>
            <person name="Andrews S."/>
            <person name="Geisel C."/>
            <person name="Layman D."/>
            <person name="Du H."/>
            <person name="Ali J."/>
            <person name="Berghoff A."/>
            <person name="Jones K."/>
            <person name="Drone K."/>
            <person name="Cotton M."/>
            <person name="Joshu C."/>
            <person name="Antonoiu B."/>
            <person name="Zidanic M."/>
            <person name="Strong C."/>
            <person name="Sun H."/>
            <person name="Lamar B."/>
            <person name="Yordan C."/>
            <person name="Ma P."/>
            <person name="Zhong J."/>
            <person name="Preston R."/>
            <person name="Vil D."/>
            <person name="Shekher M."/>
            <person name="Matero A."/>
            <person name="Shah R."/>
            <person name="Swaby I.K."/>
            <person name="O'Shaughnessy A."/>
            <person name="Rodriguez M."/>
            <person name="Hoffman J."/>
            <person name="Till S."/>
            <person name="Granat S."/>
            <person name="Shohdy N."/>
            <person name="Hasegawa A."/>
            <person name="Hameed A."/>
            <person name="Lodhi M."/>
            <person name="Johnson A."/>
            <person name="Chen E."/>
            <person name="Marra M.A."/>
            <person name="Martienssen R."/>
            <person name="McCombie W.R."/>
        </authorList>
    </citation>
    <scope>NUCLEOTIDE SEQUENCE [LARGE SCALE GENOMIC DNA]</scope>
    <source>
        <strain>cv. Columbia</strain>
    </source>
</reference>
<reference key="2">
    <citation type="journal article" date="2017" name="Plant J.">
        <title>Araport11: a complete reannotation of the Arabidopsis thaliana reference genome.</title>
        <authorList>
            <person name="Cheng C.Y."/>
            <person name="Krishnakumar V."/>
            <person name="Chan A.P."/>
            <person name="Thibaud-Nissen F."/>
            <person name="Schobel S."/>
            <person name="Town C.D."/>
        </authorList>
    </citation>
    <scope>GENOME REANNOTATION</scope>
    <source>
        <strain>cv. Columbia</strain>
    </source>
</reference>
<reference key="3">
    <citation type="journal article" date="2005" name="J. Biol. Chem.">
        <title>Cullins 3a and 3b assemble with members of the broad complex/tramtrack/bric-a-brac (BTB) protein family to form essential ubiquitin-protein ligases (E3s) in Arabidopsis.</title>
        <authorList>
            <person name="Gingerich D.J."/>
            <person name="Gagne J.M."/>
            <person name="Salter D.W."/>
            <person name="Hellmann H."/>
            <person name="Estelle M."/>
            <person name="Ma L."/>
            <person name="Vierstra R.D."/>
        </authorList>
    </citation>
    <scope>DOMAIN BTB</scope>
</reference>